<dbReference type="EC" id="1.2.1.38" evidence="1"/>
<dbReference type="EMBL" id="CP000821">
    <property type="protein sequence ID" value="ABV38880.1"/>
    <property type="molecule type" value="Genomic_DNA"/>
</dbReference>
<dbReference type="RefSeq" id="WP_012144609.1">
    <property type="nucleotide sequence ID" value="NC_009831.1"/>
</dbReference>
<dbReference type="SMR" id="A8G1A7"/>
<dbReference type="STRING" id="425104.Ssed_4276"/>
<dbReference type="KEGG" id="sse:Ssed_4276"/>
<dbReference type="eggNOG" id="COG0002">
    <property type="taxonomic scope" value="Bacteria"/>
</dbReference>
<dbReference type="HOGENOM" id="CLU_006384_0_1_6"/>
<dbReference type="OrthoDB" id="9801289at2"/>
<dbReference type="UniPathway" id="UPA00068">
    <property type="reaction ID" value="UER00108"/>
</dbReference>
<dbReference type="Proteomes" id="UP000002015">
    <property type="component" value="Chromosome"/>
</dbReference>
<dbReference type="GO" id="GO:0005737">
    <property type="term" value="C:cytoplasm"/>
    <property type="evidence" value="ECO:0007669"/>
    <property type="project" value="UniProtKB-SubCell"/>
</dbReference>
<dbReference type="GO" id="GO:0003942">
    <property type="term" value="F:N-acetyl-gamma-glutamyl-phosphate reductase activity"/>
    <property type="evidence" value="ECO:0007669"/>
    <property type="project" value="UniProtKB-UniRule"/>
</dbReference>
<dbReference type="GO" id="GO:0051287">
    <property type="term" value="F:NAD binding"/>
    <property type="evidence" value="ECO:0007669"/>
    <property type="project" value="InterPro"/>
</dbReference>
<dbReference type="GO" id="GO:0070401">
    <property type="term" value="F:NADP+ binding"/>
    <property type="evidence" value="ECO:0007669"/>
    <property type="project" value="InterPro"/>
</dbReference>
<dbReference type="GO" id="GO:0006526">
    <property type="term" value="P:L-arginine biosynthetic process"/>
    <property type="evidence" value="ECO:0007669"/>
    <property type="project" value="UniProtKB-UniRule"/>
</dbReference>
<dbReference type="CDD" id="cd23934">
    <property type="entry name" value="AGPR_1_C"/>
    <property type="match status" value="1"/>
</dbReference>
<dbReference type="CDD" id="cd17895">
    <property type="entry name" value="AGPR_1_N"/>
    <property type="match status" value="1"/>
</dbReference>
<dbReference type="FunFam" id="3.30.360.10:FF:000014">
    <property type="entry name" value="N-acetyl-gamma-glutamyl-phosphate reductase"/>
    <property type="match status" value="1"/>
</dbReference>
<dbReference type="Gene3D" id="3.30.360.10">
    <property type="entry name" value="Dihydrodipicolinate Reductase, domain 2"/>
    <property type="match status" value="1"/>
</dbReference>
<dbReference type="Gene3D" id="3.40.50.720">
    <property type="entry name" value="NAD(P)-binding Rossmann-like Domain"/>
    <property type="match status" value="1"/>
</dbReference>
<dbReference type="HAMAP" id="MF_00150">
    <property type="entry name" value="ArgC_type1"/>
    <property type="match status" value="1"/>
</dbReference>
<dbReference type="InterPro" id="IPR023013">
    <property type="entry name" value="AGPR_AS"/>
</dbReference>
<dbReference type="InterPro" id="IPR000706">
    <property type="entry name" value="AGPR_type-1"/>
</dbReference>
<dbReference type="InterPro" id="IPR036291">
    <property type="entry name" value="NAD(P)-bd_dom_sf"/>
</dbReference>
<dbReference type="InterPro" id="IPR050085">
    <property type="entry name" value="NAGSA_dehydrogenase"/>
</dbReference>
<dbReference type="InterPro" id="IPR000534">
    <property type="entry name" value="Semialdehyde_DH_NAD-bd"/>
</dbReference>
<dbReference type="NCBIfam" id="TIGR01850">
    <property type="entry name" value="argC"/>
    <property type="match status" value="1"/>
</dbReference>
<dbReference type="PANTHER" id="PTHR32338:SF10">
    <property type="entry name" value="N-ACETYL-GAMMA-GLUTAMYL-PHOSPHATE REDUCTASE, CHLOROPLASTIC-RELATED"/>
    <property type="match status" value="1"/>
</dbReference>
<dbReference type="PANTHER" id="PTHR32338">
    <property type="entry name" value="N-ACETYL-GAMMA-GLUTAMYL-PHOSPHATE REDUCTASE, CHLOROPLASTIC-RELATED-RELATED"/>
    <property type="match status" value="1"/>
</dbReference>
<dbReference type="Pfam" id="PF01118">
    <property type="entry name" value="Semialdhyde_dh"/>
    <property type="match status" value="1"/>
</dbReference>
<dbReference type="Pfam" id="PF22698">
    <property type="entry name" value="Semialdhyde_dhC_1"/>
    <property type="match status" value="1"/>
</dbReference>
<dbReference type="SMART" id="SM00859">
    <property type="entry name" value="Semialdhyde_dh"/>
    <property type="match status" value="1"/>
</dbReference>
<dbReference type="SUPFAM" id="SSF55347">
    <property type="entry name" value="Glyceraldehyde-3-phosphate dehydrogenase-like, C-terminal domain"/>
    <property type="match status" value="1"/>
</dbReference>
<dbReference type="SUPFAM" id="SSF51735">
    <property type="entry name" value="NAD(P)-binding Rossmann-fold domains"/>
    <property type="match status" value="1"/>
</dbReference>
<dbReference type="PROSITE" id="PS01224">
    <property type="entry name" value="ARGC"/>
    <property type="match status" value="1"/>
</dbReference>
<reference key="1">
    <citation type="submission" date="2007-08" db="EMBL/GenBank/DDBJ databases">
        <title>Complete sequence of Shewanella sediminis HAW-EB3.</title>
        <authorList>
            <consortium name="US DOE Joint Genome Institute"/>
            <person name="Copeland A."/>
            <person name="Lucas S."/>
            <person name="Lapidus A."/>
            <person name="Barry K."/>
            <person name="Glavina del Rio T."/>
            <person name="Dalin E."/>
            <person name="Tice H."/>
            <person name="Pitluck S."/>
            <person name="Chertkov O."/>
            <person name="Brettin T."/>
            <person name="Bruce D."/>
            <person name="Detter J.C."/>
            <person name="Han C."/>
            <person name="Schmutz J."/>
            <person name="Larimer F."/>
            <person name="Land M."/>
            <person name="Hauser L."/>
            <person name="Kyrpides N."/>
            <person name="Kim E."/>
            <person name="Zhao J.-S."/>
            <person name="Richardson P."/>
        </authorList>
    </citation>
    <scope>NUCLEOTIDE SEQUENCE [LARGE SCALE GENOMIC DNA]</scope>
    <source>
        <strain>HAW-EB3</strain>
    </source>
</reference>
<proteinExistence type="inferred from homology"/>
<name>ARGC_SHESH</name>
<gene>
    <name evidence="1" type="primary">argC</name>
    <name type="ordered locus">Ssed_4276</name>
</gene>
<keyword id="KW-0028">Amino-acid biosynthesis</keyword>
<keyword id="KW-0055">Arginine biosynthesis</keyword>
<keyword id="KW-0963">Cytoplasm</keyword>
<keyword id="KW-0521">NADP</keyword>
<keyword id="KW-0560">Oxidoreductase</keyword>
<keyword id="KW-1185">Reference proteome</keyword>
<organism>
    <name type="scientific">Shewanella sediminis (strain HAW-EB3)</name>
    <dbReference type="NCBI Taxonomy" id="425104"/>
    <lineage>
        <taxon>Bacteria</taxon>
        <taxon>Pseudomonadati</taxon>
        <taxon>Pseudomonadota</taxon>
        <taxon>Gammaproteobacteria</taxon>
        <taxon>Alteromonadales</taxon>
        <taxon>Shewanellaceae</taxon>
        <taxon>Shewanella</taxon>
    </lineage>
</organism>
<protein>
    <recommendedName>
        <fullName evidence="1">N-acetyl-gamma-glutamyl-phosphate reductase</fullName>
        <shortName evidence="1">AGPR</shortName>
        <ecNumber evidence="1">1.2.1.38</ecNumber>
    </recommendedName>
    <alternativeName>
        <fullName evidence="1">N-acetyl-glutamate semialdehyde dehydrogenase</fullName>
        <shortName evidence="1">NAGSA dehydrogenase</shortName>
    </alternativeName>
</protein>
<feature type="chain" id="PRO_1000076746" description="N-acetyl-gamma-glutamyl-phosphate reductase">
    <location>
        <begin position="1"/>
        <end position="326"/>
    </location>
</feature>
<feature type="active site" evidence="1">
    <location>
        <position position="155"/>
    </location>
</feature>
<evidence type="ECO:0000255" key="1">
    <source>
        <dbReference type="HAMAP-Rule" id="MF_00150"/>
    </source>
</evidence>
<comment type="function">
    <text evidence="1">Catalyzes the NADPH-dependent reduction of N-acetyl-5-glutamyl phosphate to yield N-acetyl-L-glutamate 5-semialdehyde.</text>
</comment>
<comment type="catalytic activity">
    <reaction evidence="1">
        <text>N-acetyl-L-glutamate 5-semialdehyde + phosphate + NADP(+) = N-acetyl-L-glutamyl 5-phosphate + NADPH + H(+)</text>
        <dbReference type="Rhea" id="RHEA:21588"/>
        <dbReference type="ChEBI" id="CHEBI:15378"/>
        <dbReference type="ChEBI" id="CHEBI:29123"/>
        <dbReference type="ChEBI" id="CHEBI:43474"/>
        <dbReference type="ChEBI" id="CHEBI:57783"/>
        <dbReference type="ChEBI" id="CHEBI:57936"/>
        <dbReference type="ChEBI" id="CHEBI:58349"/>
        <dbReference type="EC" id="1.2.1.38"/>
    </reaction>
</comment>
<comment type="pathway">
    <text evidence="1">Amino-acid biosynthesis; L-arginine biosynthesis; N(2)-acetyl-L-ornithine from L-glutamate: step 3/4.</text>
</comment>
<comment type="subcellular location">
    <subcellularLocation>
        <location evidence="1">Cytoplasm</location>
    </subcellularLocation>
</comment>
<comment type="similarity">
    <text evidence="1">Belongs to the NAGSA dehydrogenase family. Type 1 subfamily.</text>
</comment>
<sequence length="326" mass="35562">MKSIAIIGASGYTGAQITSLINADENLMIQGLYVSENSLDKGKPLSDLYPSYSHISLSLSPLCDDAKMLIVEQADAVVLATDHAVSLHLAAWFYQKGLTVFDLSGAYRFSDVEQYPKWYGFNHEYQDVLSDAVYGLAEWNSEQIASSKMIAVPGCYPTASLTALKPIGMFLTDAFPVINAVSGVTGAGRKAQLHTSFCEVSLTPYGVLGHRHQPEIATQLGQEVIFTPHLGNFKRGILATITVQLKPESTEADVAAAYAVYDDAPLITVKQNQFPKVDDVVNTPNCHLGWKFDPETHYLVVASAIDNLMKGAASQAHQCIRIHFNY</sequence>
<accession>A8G1A7</accession>